<organism>
    <name type="scientific">Invertebrate iridescent virus 3</name>
    <name type="common">IIV-3</name>
    <name type="synonym">Mosquito iridescent virus</name>
    <dbReference type="NCBI Taxonomy" id="345201"/>
    <lineage>
        <taxon>Viruses</taxon>
        <taxon>Varidnaviria</taxon>
        <taxon>Bamfordvirae</taxon>
        <taxon>Nucleocytoviricota</taxon>
        <taxon>Megaviricetes</taxon>
        <taxon>Pimascovirales</taxon>
        <taxon>Iridoviridae</taxon>
        <taxon>Betairidovirinae</taxon>
        <taxon>Chloriridovirus</taxon>
    </lineage>
</organism>
<gene>
    <name type="ORF">IIV3-031R</name>
</gene>
<comment type="similarity">
    <text evidence="1">Belongs to the IIV-6 115R family.</text>
</comment>
<feature type="chain" id="PRO_0000377924" description="Uncharacterized protein 031R">
    <location>
        <begin position="1"/>
        <end position="142"/>
    </location>
</feature>
<name>VF115_IIV3</name>
<keyword id="KW-1185">Reference proteome</keyword>
<dbReference type="EMBL" id="DQ643392">
    <property type="protein sequence ID" value="ABF82061.1"/>
    <property type="molecule type" value="Genomic_DNA"/>
</dbReference>
<dbReference type="RefSeq" id="YP_654603.1">
    <property type="nucleotide sequence ID" value="NC_008187.1"/>
</dbReference>
<dbReference type="KEGG" id="vg:4156341"/>
<dbReference type="OrthoDB" id="28272at10239"/>
<dbReference type="Proteomes" id="UP000001358">
    <property type="component" value="Genome"/>
</dbReference>
<dbReference type="InterPro" id="IPR043888">
    <property type="entry name" value="DUF5844"/>
</dbReference>
<dbReference type="Pfam" id="PF19162">
    <property type="entry name" value="DUF5844"/>
    <property type="match status" value="1"/>
</dbReference>
<proteinExistence type="inferred from homology"/>
<organismHost>
    <name type="scientific">Aedes vexans</name>
    <name type="common">Inland floodwater mosquito</name>
    <name type="synonym">Culex vexans</name>
    <dbReference type="NCBI Taxonomy" id="7163"/>
</organismHost>
<organismHost>
    <name type="scientific">Culex territans</name>
    <dbReference type="NCBI Taxonomy" id="42431"/>
</organismHost>
<organismHost>
    <name type="scientific">Culiseta annulata</name>
    <dbReference type="NCBI Taxonomy" id="332058"/>
</organismHost>
<organismHost>
    <name type="scientific">Ochlerotatus sollicitans</name>
    <name type="common">eastern saltmarsh mosquito</name>
    <dbReference type="NCBI Taxonomy" id="310513"/>
</organismHost>
<organismHost>
    <name type="scientific">Ochlerotatus taeniorhynchus</name>
    <name type="common">Black salt marsh mosquito</name>
    <name type="synonym">Aedes taeniorhynchus</name>
    <dbReference type="NCBI Taxonomy" id="329105"/>
</organismHost>
<organismHost>
    <name type="scientific">Psorophora ferox</name>
    <dbReference type="NCBI Taxonomy" id="7183"/>
</organismHost>
<protein>
    <recommendedName>
        <fullName>Uncharacterized protein 031R</fullName>
    </recommendedName>
</protein>
<reference key="1">
    <citation type="journal article" date="2006" name="J. Virol.">
        <title>Genome of invertebrate iridescent virus type 3 (mosquito iridescent virus).</title>
        <authorList>
            <person name="Delhon G."/>
            <person name="Tulman E.R."/>
            <person name="Afonso C.L."/>
            <person name="Lu Z."/>
            <person name="Becnel J.J."/>
            <person name="Moser B.A."/>
            <person name="Kutish G.F."/>
            <person name="Rock D.L."/>
        </authorList>
    </citation>
    <scope>NUCLEOTIDE SEQUENCE [LARGE SCALE GENOMIC DNA]</scope>
</reference>
<accession>Q197C9</accession>
<evidence type="ECO:0000305" key="1"/>
<sequence>MRTDATPTTTADWLGDLDLPTTTPTFKGRKTTQVRLEQRKKFVKILSSRIHYISHPRIGGLECSINLRDVCNVSPGYCALVVKHLMLLCACNPEQIFVNQWRWTVKLKNVAAMKFLSMVFADNANHPLYSLWTHWFNGTEWP</sequence>